<organism>
    <name type="scientific">Vibrio vulnificus (strain CMCP6)</name>
    <dbReference type="NCBI Taxonomy" id="216895"/>
    <lineage>
        <taxon>Bacteria</taxon>
        <taxon>Pseudomonadati</taxon>
        <taxon>Pseudomonadota</taxon>
        <taxon>Gammaproteobacteria</taxon>
        <taxon>Vibrionales</taxon>
        <taxon>Vibrionaceae</taxon>
        <taxon>Vibrio</taxon>
    </lineage>
</organism>
<accession>Q8DDD5</accession>
<reference key="1">
    <citation type="submission" date="2002-12" db="EMBL/GenBank/DDBJ databases">
        <title>Complete genome sequence of Vibrio vulnificus CMCP6.</title>
        <authorList>
            <person name="Rhee J.H."/>
            <person name="Kim S.Y."/>
            <person name="Chung S.S."/>
            <person name="Kim J.J."/>
            <person name="Moon Y.H."/>
            <person name="Jeong H."/>
            <person name="Choy H.E."/>
        </authorList>
    </citation>
    <scope>NUCLEOTIDE SEQUENCE [LARGE SCALE GENOMIC DNA]</scope>
    <source>
        <strain>CMCP6</strain>
    </source>
</reference>
<gene>
    <name evidence="1" type="primary">hemF</name>
    <name type="ordered locus">VV1_1056</name>
</gene>
<name>HEM6_VIBVU</name>
<dbReference type="EC" id="1.3.3.3" evidence="1"/>
<dbReference type="EMBL" id="AE016795">
    <property type="protein sequence ID" value="AAO09543.1"/>
    <property type="molecule type" value="Genomic_DNA"/>
</dbReference>
<dbReference type="RefSeq" id="WP_011079089.1">
    <property type="nucleotide sequence ID" value="NC_004459.3"/>
</dbReference>
<dbReference type="SMR" id="Q8DDD5"/>
<dbReference type="KEGG" id="vvu:VV1_1056"/>
<dbReference type="HOGENOM" id="CLU_026169_0_1_6"/>
<dbReference type="UniPathway" id="UPA00251">
    <property type="reaction ID" value="UER00322"/>
</dbReference>
<dbReference type="Proteomes" id="UP000002275">
    <property type="component" value="Chromosome 1"/>
</dbReference>
<dbReference type="GO" id="GO:0005737">
    <property type="term" value="C:cytoplasm"/>
    <property type="evidence" value="ECO:0007669"/>
    <property type="project" value="UniProtKB-SubCell"/>
</dbReference>
<dbReference type="GO" id="GO:0004109">
    <property type="term" value="F:coproporphyrinogen oxidase activity"/>
    <property type="evidence" value="ECO:0007669"/>
    <property type="project" value="UniProtKB-UniRule"/>
</dbReference>
<dbReference type="GO" id="GO:0046872">
    <property type="term" value="F:metal ion binding"/>
    <property type="evidence" value="ECO:0007669"/>
    <property type="project" value="UniProtKB-KW"/>
</dbReference>
<dbReference type="GO" id="GO:0042803">
    <property type="term" value="F:protein homodimerization activity"/>
    <property type="evidence" value="ECO:0000250"/>
    <property type="project" value="UniProtKB"/>
</dbReference>
<dbReference type="GO" id="GO:0006782">
    <property type="term" value="P:protoporphyrinogen IX biosynthetic process"/>
    <property type="evidence" value="ECO:0007669"/>
    <property type="project" value="UniProtKB-UniRule"/>
</dbReference>
<dbReference type="FunFam" id="3.40.1500.10:FF:000001">
    <property type="entry name" value="Oxygen-dependent coproporphyrinogen-III oxidase"/>
    <property type="match status" value="1"/>
</dbReference>
<dbReference type="Gene3D" id="3.40.1500.10">
    <property type="entry name" value="Coproporphyrinogen III oxidase, aerobic"/>
    <property type="match status" value="1"/>
</dbReference>
<dbReference type="HAMAP" id="MF_00333">
    <property type="entry name" value="Coprogen_oxidas"/>
    <property type="match status" value="1"/>
</dbReference>
<dbReference type="InterPro" id="IPR001260">
    <property type="entry name" value="Coprogen_oxidase_aer"/>
</dbReference>
<dbReference type="InterPro" id="IPR036406">
    <property type="entry name" value="Coprogen_oxidase_aer_sf"/>
</dbReference>
<dbReference type="InterPro" id="IPR018375">
    <property type="entry name" value="Coprogen_oxidase_CS"/>
</dbReference>
<dbReference type="NCBIfam" id="NF003727">
    <property type="entry name" value="PRK05330.1"/>
    <property type="match status" value="1"/>
</dbReference>
<dbReference type="PANTHER" id="PTHR10755">
    <property type="entry name" value="COPROPORPHYRINOGEN III OXIDASE, MITOCHONDRIAL"/>
    <property type="match status" value="1"/>
</dbReference>
<dbReference type="PANTHER" id="PTHR10755:SF0">
    <property type="entry name" value="OXYGEN-DEPENDENT COPROPORPHYRINOGEN-III OXIDASE, MITOCHONDRIAL"/>
    <property type="match status" value="1"/>
</dbReference>
<dbReference type="Pfam" id="PF01218">
    <property type="entry name" value="Coprogen_oxidas"/>
    <property type="match status" value="1"/>
</dbReference>
<dbReference type="PIRSF" id="PIRSF000166">
    <property type="entry name" value="Coproporphyri_ox"/>
    <property type="match status" value="1"/>
</dbReference>
<dbReference type="PRINTS" id="PR00073">
    <property type="entry name" value="COPRGNOXDASE"/>
</dbReference>
<dbReference type="SUPFAM" id="SSF102886">
    <property type="entry name" value="Coproporphyrinogen III oxidase"/>
    <property type="match status" value="1"/>
</dbReference>
<dbReference type="PROSITE" id="PS01021">
    <property type="entry name" value="COPROGEN_OXIDASE"/>
    <property type="match status" value="1"/>
</dbReference>
<comment type="function">
    <text evidence="1">Involved in the heme biosynthesis. Catalyzes the aerobic oxidative decarboxylation of propionate groups of rings A and B of coproporphyrinogen-III to yield the vinyl groups in protoporphyrinogen-IX.</text>
</comment>
<comment type="catalytic activity">
    <reaction evidence="1">
        <text>coproporphyrinogen III + O2 + 2 H(+) = protoporphyrinogen IX + 2 CO2 + 2 H2O</text>
        <dbReference type="Rhea" id="RHEA:18257"/>
        <dbReference type="ChEBI" id="CHEBI:15377"/>
        <dbReference type="ChEBI" id="CHEBI:15378"/>
        <dbReference type="ChEBI" id="CHEBI:15379"/>
        <dbReference type="ChEBI" id="CHEBI:16526"/>
        <dbReference type="ChEBI" id="CHEBI:57307"/>
        <dbReference type="ChEBI" id="CHEBI:57309"/>
        <dbReference type="EC" id="1.3.3.3"/>
    </reaction>
</comment>
<comment type="cofactor">
    <cofactor evidence="1">
        <name>a divalent metal cation</name>
        <dbReference type="ChEBI" id="CHEBI:60240"/>
    </cofactor>
</comment>
<comment type="pathway">
    <text evidence="1">Porphyrin-containing compound metabolism; protoporphyrin-IX biosynthesis; protoporphyrinogen-IX from coproporphyrinogen-III (O2 route): step 1/1.</text>
</comment>
<comment type="subunit">
    <text evidence="1">Homodimer.</text>
</comment>
<comment type="subcellular location">
    <subcellularLocation>
        <location evidence="1">Cytoplasm</location>
    </subcellularLocation>
</comment>
<comment type="similarity">
    <text evidence="1">Belongs to the aerobic coproporphyrinogen-III oxidase family.</text>
</comment>
<sequence>MSTIDKEAVKLYLMQLQDQICQRLEQEDGKATFIEDAWYREPGDRLGGGGRTRVMRDGNVFEQGGVNFSHVQGNAMPASATAHRPELAGRRFEAMGVSLVMHPHNPYVPTSHANVRFFIAEKEGEAPIWWFGGGFDLTPFYPFEEDCQFWHNTAKEVCAPFGADVYAQHKAWCDDYFYLPHRGETRGIGGLFFDDLNQWEFDKCFDYIKAVGEGYCDAYLPIVERRKVTEYGEREREFQLYRRGRYVEFNLVYDRGTLFGLQSGGRTESILMSMPPLARWEYSYEPQADSPEASLYQHYLKPREW</sequence>
<protein>
    <recommendedName>
        <fullName evidence="1">Oxygen-dependent coproporphyrinogen-III oxidase</fullName>
        <shortName evidence="1">CPO</shortName>
        <shortName evidence="1">Coprogen oxidase</shortName>
        <shortName evidence="1">Coproporphyrinogenase</shortName>
        <ecNumber evidence="1">1.3.3.3</ecNumber>
    </recommendedName>
</protein>
<proteinExistence type="inferred from homology"/>
<keyword id="KW-0963">Cytoplasm</keyword>
<keyword id="KW-0350">Heme biosynthesis</keyword>
<keyword id="KW-0479">Metal-binding</keyword>
<keyword id="KW-0560">Oxidoreductase</keyword>
<keyword id="KW-0627">Porphyrin biosynthesis</keyword>
<feature type="chain" id="PRO_0000109928" description="Oxygen-dependent coproporphyrinogen-III oxidase">
    <location>
        <begin position="1"/>
        <end position="305"/>
    </location>
</feature>
<feature type="region of interest" description="Important for dimerization" evidence="1">
    <location>
        <begin position="246"/>
        <end position="281"/>
    </location>
</feature>
<feature type="active site" description="Proton donor" evidence="1">
    <location>
        <position position="112"/>
    </location>
</feature>
<feature type="binding site" evidence="1">
    <location>
        <position position="98"/>
    </location>
    <ligand>
        <name>substrate</name>
    </ligand>
</feature>
<feature type="binding site" evidence="1">
    <location>
        <position position="102"/>
    </location>
    <ligand>
        <name>a divalent metal cation</name>
        <dbReference type="ChEBI" id="CHEBI:60240"/>
    </ligand>
</feature>
<feature type="binding site" evidence="1">
    <location>
        <position position="112"/>
    </location>
    <ligand>
        <name>a divalent metal cation</name>
        <dbReference type="ChEBI" id="CHEBI:60240"/>
    </ligand>
</feature>
<feature type="binding site" evidence="1">
    <location>
        <begin position="114"/>
        <end position="116"/>
    </location>
    <ligand>
        <name>substrate</name>
    </ligand>
</feature>
<feature type="binding site" evidence="1">
    <location>
        <position position="151"/>
    </location>
    <ligand>
        <name>a divalent metal cation</name>
        <dbReference type="ChEBI" id="CHEBI:60240"/>
    </ligand>
</feature>
<feature type="binding site" evidence="1">
    <location>
        <position position="181"/>
    </location>
    <ligand>
        <name>a divalent metal cation</name>
        <dbReference type="ChEBI" id="CHEBI:60240"/>
    </ligand>
</feature>
<feature type="binding site" evidence="1">
    <location>
        <begin position="264"/>
        <end position="266"/>
    </location>
    <ligand>
        <name>substrate</name>
    </ligand>
</feature>
<feature type="site" description="Important for dimerization" evidence="1">
    <location>
        <position position="181"/>
    </location>
</feature>
<evidence type="ECO:0000255" key="1">
    <source>
        <dbReference type="HAMAP-Rule" id="MF_00333"/>
    </source>
</evidence>